<feature type="chain" id="PRO_0000084253" description="IMP-specific 5'-nucleotidase 1">
    <location>
        <begin position="1"/>
        <end position="422"/>
    </location>
</feature>
<feature type="active site" description="Nucleophile" evidence="1">
    <location>
        <position position="146"/>
    </location>
</feature>
<feature type="active site" description="Proton donor" evidence="1">
    <location>
        <position position="148"/>
    </location>
</feature>
<feature type="binding site" evidence="1">
    <location>
        <position position="106"/>
    </location>
    <ligand>
        <name>ATP</name>
        <dbReference type="ChEBI" id="CHEBI:30616"/>
        <note>allosteric activator</note>
    </ligand>
</feature>
<feature type="binding site" evidence="1">
    <location>
        <position position="124"/>
    </location>
    <ligand>
        <name>ATP</name>
        <dbReference type="ChEBI" id="CHEBI:30616"/>
        <note>allosteric activator</note>
    </ligand>
</feature>
<feature type="binding site" evidence="1">
    <location>
        <position position="146"/>
    </location>
    <ligand>
        <name>IMP</name>
        <dbReference type="ChEBI" id="CHEBI:58053"/>
    </ligand>
</feature>
<feature type="binding site" evidence="1">
    <location>
        <position position="146"/>
    </location>
    <ligand>
        <name>Mg(2+)</name>
        <dbReference type="ChEBI" id="CHEBI:18420"/>
    </ligand>
</feature>
<feature type="binding site" evidence="1">
    <location>
        <position position="148"/>
    </location>
    <ligand>
        <name>IMP</name>
        <dbReference type="ChEBI" id="CHEBI:58053"/>
    </ligand>
</feature>
<feature type="binding site" evidence="1">
    <location>
        <position position="148"/>
    </location>
    <ligand>
        <name>Mg(2+)</name>
        <dbReference type="ChEBI" id="CHEBI:18420"/>
    </ligand>
</feature>
<feature type="binding site" evidence="1">
    <location>
        <position position="154"/>
    </location>
    <ligand>
        <name>IMP</name>
        <dbReference type="ChEBI" id="CHEBI:58053"/>
    </ligand>
</feature>
<feature type="binding site" evidence="1">
    <location>
        <position position="182"/>
    </location>
    <ligand>
        <name>IMP</name>
        <dbReference type="ChEBI" id="CHEBI:58053"/>
    </ligand>
</feature>
<feature type="binding site" evidence="1">
    <location>
        <position position="348"/>
    </location>
    <ligand>
        <name>IMP</name>
        <dbReference type="ChEBI" id="CHEBI:58053"/>
    </ligand>
</feature>
<feature type="binding site" evidence="1">
    <location>
        <position position="356"/>
    </location>
    <ligand>
        <name>IMP</name>
        <dbReference type="ChEBI" id="CHEBI:58053"/>
    </ligand>
</feature>
<feature type="binding site" evidence="1">
    <location>
        <position position="383"/>
    </location>
    <ligand>
        <name>Mg(2+)</name>
        <dbReference type="ChEBI" id="CHEBI:18420"/>
    </ligand>
</feature>
<keyword id="KW-0067">ATP-binding</keyword>
<keyword id="KW-0378">Hydrolase</keyword>
<keyword id="KW-0460">Magnesium</keyword>
<keyword id="KW-0479">Metal-binding</keyword>
<keyword id="KW-0546">Nucleotide metabolism</keyword>
<keyword id="KW-0547">Nucleotide-binding</keyword>
<keyword id="KW-1185">Reference proteome</keyword>
<dbReference type="EC" id="3.1.3.99" evidence="2"/>
<dbReference type="EMBL" id="CR382121">
    <property type="protein sequence ID" value="CAH02693.1"/>
    <property type="molecule type" value="Genomic_DNA"/>
</dbReference>
<dbReference type="RefSeq" id="XP_451105.1">
    <property type="nucleotide sequence ID" value="XM_451105.1"/>
</dbReference>
<dbReference type="SMR" id="Q6CY84"/>
<dbReference type="FunCoup" id="Q6CY84">
    <property type="interactions" value="104"/>
</dbReference>
<dbReference type="STRING" id="284590.Q6CY84"/>
<dbReference type="PaxDb" id="284590-Q6CY84"/>
<dbReference type="KEGG" id="kla:KLLA0_A02365g"/>
<dbReference type="eggNOG" id="ENOG502QR24">
    <property type="taxonomic scope" value="Eukaryota"/>
</dbReference>
<dbReference type="HOGENOM" id="CLU_031816_1_0_1"/>
<dbReference type="InParanoid" id="Q6CY84"/>
<dbReference type="OMA" id="WGVLACQ"/>
<dbReference type="Proteomes" id="UP000000598">
    <property type="component" value="Chromosome A"/>
</dbReference>
<dbReference type="GO" id="GO:0005524">
    <property type="term" value="F:ATP binding"/>
    <property type="evidence" value="ECO:0007669"/>
    <property type="project" value="UniProtKB-KW"/>
</dbReference>
<dbReference type="GO" id="GO:0050483">
    <property type="term" value="F:IMP 5'-nucleotidase activity"/>
    <property type="evidence" value="ECO:0007669"/>
    <property type="project" value="InterPro"/>
</dbReference>
<dbReference type="GO" id="GO:0000287">
    <property type="term" value="F:magnesium ion binding"/>
    <property type="evidence" value="ECO:0007669"/>
    <property type="project" value="InterPro"/>
</dbReference>
<dbReference type="GO" id="GO:0006190">
    <property type="term" value="P:inosine salvage"/>
    <property type="evidence" value="ECO:0007669"/>
    <property type="project" value="InterPro"/>
</dbReference>
<dbReference type="GO" id="GO:0071590">
    <property type="term" value="P:nicotinamide riboside biosynthetic process"/>
    <property type="evidence" value="ECO:0007669"/>
    <property type="project" value="TreeGrafter"/>
</dbReference>
<dbReference type="GO" id="GO:0071592">
    <property type="term" value="P:nicotinic acid riboside biosynthetic process"/>
    <property type="evidence" value="ECO:0007669"/>
    <property type="project" value="TreeGrafter"/>
</dbReference>
<dbReference type="GO" id="GO:0009117">
    <property type="term" value="P:nucleotide metabolic process"/>
    <property type="evidence" value="ECO:0007669"/>
    <property type="project" value="UniProtKB-KW"/>
</dbReference>
<dbReference type="InterPro" id="IPR036412">
    <property type="entry name" value="HAD-like_sf"/>
</dbReference>
<dbReference type="InterPro" id="IPR009453">
    <property type="entry name" value="ISN1"/>
</dbReference>
<dbReference type="PANTHER" id="PTHR28213">
    <property type="entry name" value="IMP-SPECIFIC 5'-NUCLEOTIDASE 1"/>
    <property type="match status" value="1"/>
</dbReference>
<dbReference type="PANTHER" id="PTHR28213:SF1">
    <property type="entry name" value="IMP-SPECIFIC 5'-NUCLEOTIDASE 1"/>
    <property type="match status" value="1"/>
</dbReference>
<dbReference type="Pfam" id="PF06437">
    <property type="entry name" value="ISN1"/>
    <property type="match status" value="1"/>
</dbReference>
<dbReference type="PIRSF" id="PIRSF028836">
    <property type="entry name" value="ISN1"/>
    <property type="match status" value="1"/>
</dbReference>
<dbReference type="SUPFAM" id="SSF56784">
    <property type="entry name" value="HAD-like"/>
    <property type="match status" value="1"/>
</dbReference>
<comment type="function">
    <text evidence="2">IMP-specific 5'-nucleotidase involved in IMP (inositol monophosphate) degradation.</text>
</comment>
<comment type="catalytic activity">
    <reaction evidence="2">
        <text>IMP + H2O = inosine + phosphate</text>
        <dbReference type="Rhea" id="RHEA:27718"/>
        <dbReference type="ChEBI" id="CHEBI:15377"/>
        <dbReference type="ChEBI" id="CHEBI:17596"/>
        <dbReference type="ChEBI" id="CHEBI:43474"/>
        <dbReference type="ChEBI" id="CHEBI:58053"/>
        <dbReference type="EC" id="3.1.3.99"/>
    </reaction>
</comment>
<comment type="cofactor">
    <cofactor evidence="2">
        <name>Mg(2+)</name>
        <dbReference type="ChEBI" id="CHEBI:18420"/>
    </cofactor>
</comment>
<comment type="activity regulation">
    <text evidence="1 2">Allosterically activated by ATP (By similarity). ATP binding is a prerequisite to magnesium and substrate binding. ATP binds to 2 of the subunits in the homotetramer inducing a closure of these 2 subunits and the release of the C-terminal loop, thereby activating the enzyme (By similarity).</text>
</comment>
<comment type="subunit">
    <text evidence="2">Homotetramer.</text>
</comment>
<comment type="similarity">
    <text evidence="3">Belongs to the ISN1 family.</text>
</comment>
<organism>
    <name type="scientific">Kluyveromyces lactis (strain ATCC 8585 / CBS 2359 / DSM 70799 / NBRC 1267 / NRRL Y-1140 / WM37)</name>
    <name type="common">Yeast</name>
    <name type="synonym">Candida sphaerica</name>
    <dbReference type="NCBI Taxonomy" id="284590"/>
    <lineage>
        <taxon>Eukaryota</taxon>
        <taxon>Fungi</taxon>
        <taxon>Dikarya</taxon>
        <taxon>Ascomycota</taxon>
        <taxon>Saccharomycotina</taxon>
        <taxon>Saccharomycetes</taxon>
        <taxon>Saccharomycetales</taxon>
        <taxon>Saccharomycetaceae</taxon>
        <taxon>Kluyveromyces</taxon>
    </lineage>
</organism>
<proteinExistence type="inferred from homology"/>
<name>ISN1_KLULA</name>
<gene>
    <name type="primary">ISN1</name>
    <name type="ordered locus">KLLA0A02365g</name>
</gene>
<reference key="1">
    <citation type="journal article" date="2004" name="Nature">
        <title>Genome evolution in yeasts.</title>
        <authorList>
            <person name="Dujon B."/>
            <person name="Sherman D."/>
            <person name="Fischer G."/>
            <person name="Durrens P."/>
            <person name="Casaregola S."/>
            <person name="Lafontaine I."/>
            <person name="de Montigny J."/>
            <person name="Marck C."/>
            <person name="Neuveglise C."/>
            <person name="Talla E."/>
            <person name="Goffard N."/>
            <person name="Frangeul L."/>
            <person name="Aigle M."/>
            <person name="Anthouard V."/>
            <person name="Babour A."/>
            <person name="Barbe V."/>
            <person name="Barnay S."/>
            <person name="Blanchin S."/>
            <person name="Beckerich J.-M."/>
            <person name="Beyne E."/>
            <person name="Bleykasten C."/>
            <person name="Boisrame A."/>
            <person name="Boyer J."/>
            <person name="Cattolico L."/>
            <person name="Confanioleri F."/>
            <person name="de Daruvar A."/>
            <person name="Despons L."/>
            <person name="Fabre E."/>
            <person name="Fairhead C."/>
            <person name="Ferry-Dumazet H."/>
            <person name="Groppi A."/>
            <person name="Hantraye F."/>
            <person name="Hennequin C."/>
            <person name="Jauniaux N."/>
            <person name="Joyet P."/>
            <person name="Kachouri R."/>
            <person name="Kerrest A."/>
            <person name="Koszul R."/>
            <person name="Lemaire M."/>
            <person name="Lesur I."/>
            <person name="Ma L."/>
            <person name="Muller H."/>
            <person name="Nicaud J.-M."/>
            <person name="Nikolski M."/>
            <person name="Oztas S."/>
            <person name="Ozier-Kalogeropoulos O."/>
            <person name="Pellenz S."/>
            <person name="Potier S."/>
            <person name="Richard G.-F."/>
            <person name="Straub M.-L."/>
            <person name="Suleau A."/>
            <person name="Swennen D."/>
            <person name="Tekaia F."/>
            <person name="Wesolowski-Louvel M."/>
            <person name="Westhof E."/>
            <person name="Wirth B."/>
            <person name="Zeniou-Meyer M."/>
            <person name="Zivanovic Y."/>
            <person name="Bolotin-Fukuhara M."/>
            <person name="Thierry A."/>
            <person name="Bouchier C."/>
            <person name="Caudron B."/>
            <person name="Scarpelli C."/>
            <person name="Gaillardin C."/>
            <person name="Weissenbach J."/>
            <person name="Wincker P."/>
            <person name="Souciet J.-L."/>
        </authorList>
    </citation>
    <scope>NUCLEOTIDE SEQUENCE [LARGE SCALE GENOMIC DNA]</scope>
    <source>
        <strain>ATCC 8585 / CBS 2359 / DSM 70799 / NBRC 1267 / NRRL Y-1140 / WM37</strain>
    </source>
</reference>
<evidence type="ECO:0000250" key="1">
    <source>
        <dbReference type="UniProtKB" id="A0A144A134"/>
    </source>
</evidence>
<evidence type="ECO:0000250" key="2">
    <source>
        <dbReference type="UniProtKB" id="Q99312"/>
    </source>
</evidence>
<evidence type="ECO:0000305" key="3"/>
<protein>
    <recommendedName>
        <fullName>IMP-specific 5'-nucleotidase 1</fullName>
        <ecNumber evidence="2">3.1.3.99</ecNumber>
    </recommendedName>
</protein>
<sequence>MSSRYRVEYNLKVHKKDAFIEWIKGLLAVPFVLQAGTDSGAERTYKQYCSIFSDIENLVSQKIEIQNRRRQLGSLEEARLDQLVPQVGTFFTHLPLVEAFEVQNRRRAICSRKMVSPSFNDIRHILNSAQILALLKSKELKLVTFDGDVTLYEDGGSIERGGKIVTRIITLLKRGINVGVVTAAGYDDPDKYKERLYGLCFALFSDKSMSLEQKSKLTVMGGESNYLFQYFETSEQFGFKSIDDDEWVPSSVKAWSDDDIDATLDVAQTCFGELSHLLALPSKCQIIRKKRAVGFVPGFIFDDELEVNVKIKIPREALEEMVLVVQKKLESYPPAQNIQFSCFDGGSDVWCDIGGKDLGVSILQNFYQTDSPITAAQTLHIGDQFAPKGSANDFKARSAGCTLWISSPRETIEVLDDLLPYL</sequence>
<accession>Q6CY84</accession>